<dbReference type="EC" id="2.1.2.10" evidence="1"/>
<dbReference type="EMBL" id="AE005674">
    <property type="protein sequence ID" value="AAN44375.1"/>
    <property type="molecule type" value="Genomic_DNA"/>
</dbReference>
<dbReference type="EMBL" id="AE014073">
    <property type="protein sequence ID" value="AAP18197.1"/>
    <property type="molecule type" value="Genomic_DNA"/>
</dbReference>
<dbReference type="RefSeq" id="NP_708668.1">
    <property type="nucleotide sequence ID" value="NC_004337.2"/>
</dbReference>
<dbReference type="RefSeq" id="WP_000068718.1">
    <property type="nucleotide sequence ID" value="NZ_WPGW01000018.1"/>
</dbReference>
<dbReference type="SMR" id="Q83JU1"/>
<dbReference type="STRING" id="198214.SF2891"/>
<dbReference type="PaxDb" id="198214-SF2891"/>
<dbReference type="GeneID" id="1025944"/>
<dbReference type="KEGG" id="sfl:SF2891"/>
<dbReference type="KEGG" id="sfx:S3090"/>
<dbReference type="PATRIC" id="fig|198214.7.peg.3440"/>
<dbReference type="HOGENOM" id="CLU_007884_10_2_6"/>
<dbReference type="Proteomes" id="UP000001006">
    <property type="component" value="Chromosome"/>
</dbReference>
<dbReference type="Proteomes" id="UP000002673">
    <property type="component" value="Chromosome"/>
</dbReference>
<dbReference type="GO" id="GO:0005829">
    <property type="term" value="C:cytosol"/>
    <property type="evidence" value="ECO:0007669"/>
    <property type="project" value="TreeGrafter"/>
</dbReference>
<dbReference type="GO" id="GO:0005960">
    <property type="term" value="C:glycine cleavage complex"/>
    <property type="evidence" value="ECO:0007669"/>
    <property type="project" value="InterPro"/>
</dbReference>
<dbReference type="GO" id="GO:0004047">
    <property type="term" value="F:aminomethyltransferase activity"/>
    <property type="evidence" value="ECO:0007669"/>
    <property type="project" value="UniProtKB-UniRule"/>
</dbReference>
<dbReference type="GO" id="GO:0008483">
    <property type="term" value="F:transaminase activity"/>
    <property type="evidence" value="ECO:0007669"/>
    <property type="project" value="UniProtKB-KW"/>
</dbReference>
<dbReference type="GO" id="GO:0019464">
    <property type="term" value="P:glycine decarboxylation via glycine cleavage system"/>
    <property type="evidence" value="ECO:0007669"/>
    <property type="project" value="UniProtKB-UniRule"/>
</dbReference>
<dbReference type="FunFam" id="2.40.30.110:FF:000001">
    <property type="entry name" value="Aminomethyltransferase"/>
    <property type="match status" value="1"/>
</dbReference>
<dbReference type="FunFam" id="3.30.70.1400:FF:000001">
    <property type="entry name" value="Aminomethyltransferase"/>
    <property type="match status" value="1"/>
</dbReference>
<dbReference type="FunFam" id="4.10.1250.10:FF:000001">
    <property type="entry name" value="Aminomethyltransferase"/>
    <property type="match status" value="1"/>
</dbReference>
<dbReference type="Gene3D" id="2.40.30.110">
    <property type="entry name" value="Aminomethyltransferase beta-barrel domains"/>
    <property type="match status" value="1"/>
</dbReference>
<dbReference type="Gene3D" id="3.30.70.1400">
    <property type="entry name" value="Aminomethyltransferase beta-barrel domains"/>
    <property type="match status" value="1"/>
</dbReference>
<dbReference type="Gene3D" id="4.10.1250.10">
    <property type="entry name" value="Aminomethyltransferase fragment"/>
    <property type="match status" value="1"/>
</dbReference>
<dbReference type="Gene3D" id="3.30.1360.120">
    <property type="entry name" value="Probable tRNA modification gtpase trme, domain 1"/>
    <property type="match status" value="1"/>
</dbReference>
<dbReference type="HAMAP" id="MF_00259">
    <property type="entry name" value="GcvT"/>
    <property type="match status" value="1"/>
</dbReference>
<dbReference type="InterPro" id="IPR006223">
    <property type="entry name" value="GCS_T"/>
</dbReference>
<dbReference type="InterPro" id="IPR022903">
    <property type="entry name" value="GCS_T_bac"/>
</dbReference>
<dbReference type="InterPro" id="IPR013977">
    <property type="entry name" value="GCST_C"/>
</dbReference>
<dbReference type="InterPro" id="IPR006222">
    <property type="entry name" value="GCV_T_N"/>
</dbReference>
<dbReference type="InterPro" id="IPR028896">
    <property type="entry name" value="GcvT/YgfZ/DmdA"/>
</dbReference>
<dbReference type="InterPro" id="IPR029043">
    <property type="entry name" value="GcvT/YgfZ_C"/>
</dbReference>
<dbReference type="InterPro" id="IPR027266">
    <property type="entry name" value="TrmE/GcvT_dom1"/>
</dbReference>
<dbReference type="NCBIfam" id="TIGR00528">
    <property type="entry name" value="gcvT"/>
    <property type="match status" value="1"/>
</dbReference>
<dbReference type="NCBIfam" id="NF001567">
    <property type="entry name" value="PRK00389.1"/>
    <property type="match status" value="1"/>
</dbReference>
<dbReference type="PANTHER" id="PTHR43757">
    <property type="entry name" value="AMINOMETHYLTRANSFERASE"/>
    <property type="match status" value="1"/>
</dbReference>
<dbReference type="PANTHER" id="PTHR43757:SF2">
    <property type="entry name" value="AMINOMETHYLTRANSFERASE, MITOCHONDRIAL"/>
    <property type="match status" value="1"/>
</dbReference>
<dbReference type="Pfam" id="PF01571">
    <property type="entry name" value="GCV_T"/>
    <property type="match status" value="1"/>
</dbReference>
<dbReference type="Pfam" id="PF08669">
    <property type="entry name" value="GCV_T_C"/>
    <property type="match status" value="1"/>
</dbReference>
<dbReference type="PIRSF" id="PIRSF006487">
    <property type="entry name" value="GcvT"/>
    <property type="match status" value="1"/>
</dbReference>
<dbReference type="SUPFAM" id="SSF101790">
    <property type="entry name" value="Aminomethyltransferase beta-barrel domain"/>
    <property type="match status" value="1"/>
</dbReference>
<dbReference type="SUPFAM" id="SSF103025">
    <property type="entry name" value="Folate-binding domain"/>
    <property type="match status" value="1"/>
</dbReference>
<evidence type="ECO:0000255" key="1">
    <source>
        <dbReference type="HAMAP-Rule" id="MF_00259"/>
    </source>
</evidence>
<accession>Q83JU1</accession>
<accession>Q7C039</accession>
<reference key="1">
    <citation type="journal article" date="2002" name="Nucleic Acids Res.">
        <title>Genome sequence of Shigella flexneri 2a: insights into pathogenicity through comparison with genomes of Escherichia coli K12 and O157.</title>
        <authorList>
            <person name="Jin Q."/>
            <person name="Yuan Z."/>
            <person name="Xu J."/>
            <person name="Wang Y."/>
            <person name="Shen Y."/>
            <person name="Lu W."/>
            <person name="Wang J."/>
            <person name="Liu H."/>
            <person name="Yang J."/>
            <person name="Yang F."/>
            <person name="Zhang X."/>
            <person name="Zhang J."/>
            <person name="Yang G."/>
            <person name="Wu H."/>
            <person name="Qu D."/>
            <person name="Dong J."/>
            <person name="Sun L."/>
            <person name="Xue Y."/>
            <person name="Zhao A."/>
            <person name="Gao Y."/>
            <person name="Zhu J."/>
            <person name="Kan B."/>
            <person name="Ding K."/>
            <person name="Chen S."/>
            <person name="Cheng H."/>
            <person name="Yao Z."/>
            <person name="He B."/>
            <person name="Chen R."/>
            <person name="Ma D."/>
            <person name="Qiang B."/>
            <person name="Wen Y."/>
            <person name="Hou Y."/>
            <person name="Yu J."/>
        </authorList>
    </citation>
    <scope>NUCLEOTIDE SEQUENCE [LARGE SCALE GENOMIC DNA]</scope>
    <source>
        <strain>301 / Serotype 2a</strain>
    </source>
</reference>
<reference key="2">
    <citation type="journal article" date="2003" name="Infect. Immun.">
        <title>Complete genome sequence and comparative genomics of Shigella flexneri serotype 2a strain 2457T.</title>
        <authorList>
            <person name="Wei J."/>
            <person name="Goldberg M.B."/>
            <person name="Burland V."/>
            <person name="Venkatesan M.M."/>
            <person name="Deng W."/>
            <person name="Fournier G."/>
            <person name="Mayhew G.F."/>
            <person name="Plunkett G. III"/>
            <person name="Rose D.J."/>
            <person name="Darling A."/>
            <person name="Mau B."/>
            <person name="Perna N.T."/>
            <person name="Payne S.M."/>
            <person name="Runyen-Janecky L.J."/>
            <person name="Zhou S."/>
            <person name="Schwartz D.C."/>
            <person name="Blattner F.R."/>
        </authorList>
    </citation>
    <scope>NUCLEOTIDE SEQUENCE [LARGE SCALE GENOMIC DNA]</scope>
    <source>
        <strain>ATCC 700930 / 2457T / Serotype 2a</strain>
    </source>
</reference>
<name>GCST_SHIFL</name>
<keyword id="KW-0032">Aminotransferase</keyword>
<keyword id="KW-1185">Reference proteome</keyword>
<keyword id="KW-0808">Transferase</keyword>
<organism>
    <name type="scientific">Shigella flexneri</name>
    <dbReference type="NCBI Taxonomy" id="623"/>
    <lineage>
        <taxon>Bacteria</taxon>
        <taxon>Pseudomonadati</taxon>
        <taxon>Pseudomonadota</taxon>
        <taxon>Gammaproteobacteria</taxon>
        <taxon>Enterobacterales</taxon>
        <taxon>Enterobacteriaceae</taxon>
        <taxon>Shigella</taxon>
    </lineage>
</organism>
<gene>
    <name evidence="1" type="primary">gcvT</name>
    <name type="ordered locus">SF2891</name>
    <name type="ordered locus">S3090</name>
</gene>
<feature type="chain" id="PRO_0000122594" description="Aminomethyltransferase">
    <location>
        <begin position="1"/>
        <end position="364"/>
    </location>
</feature>
<protein>
    <recommendedName>
        <fullName evidence="1">Aminomethyltransferase</fullName>
        <ecNumber evidence="1">2.1.2.10</ecNumber>
    </recommendedName>
    <alternativeName>
        <fullName evidence="1">Glycine cleavage system T protein</fullName>
    </alternativeName>
</protein>
<sequence>MAQQTPLYEQHTLCGARMVDFHGWMMPLHYGSQIDEHHAVRTDAGMFDVSHMTIVDLRGSRTREFLRYLLANDVAKLTKSGKALYSGMLNASGGVIDDLIVYYFTEDFFRLVVNSATREKDLSWITQHAEPFGIEITVRDDLSMIAVQGPNAQAKAATLFNDAQRQAVEGMKPFFGVQVGDLFIATTGYTGEAGYEIALPNEKAADFWRALVEAGVKPCGLGARDTLRLEAGMNLYGQEMDETISPLAANMGWTIAWEPTDRDFIGREALEVQREHGTEKLVGLVMTEKGVLRNELPVRFTDAQGNQHEGIITSGTFSPTLGYSIALARVPEGIGETAIVQIRNREMPVKVTKPVFVRNGKAVA</sequence>
<comment type="function">
    <text evidence="1">The glycine cleavage system catalyzes the degradation of glycine.</text>
</comment>
<comment type="catalytic activity">
    <reaction evidence="1">
        <text>N(6)-[(R)-S(8)-aminomethyldihydrolipoyl]-L-lysyl-[protein] + (6S)-5,6,7,8-tetrahydrofolate = N(6)-[(R)-dihydrolipoyl]-L-lysyl-[protein] + (6R)-5,10-methylene-5,6,7,8-tetrahydrofolate + NH4(+)</text>
        <dbReference type="Rhea" id="RHEA:16945"/>
        <dbReference type="Rhea" id="RHEA-COMP:10475"/>
        <dbReference type="Rhea" id="RHEA-COMP:10492"/>
        <dbReference type="ChEBI" id="CHEBI:15636"/>
        <dbReference type="ChEBI" id="CHEBI:28938"/>
        <dbReference type="ChEBI" id="CHEBI:57453"/>
        <dbReference type="ChEBI" id="CHEBI:83100"/>
        <dbReference type="ChEBI" id="CHEBI:83143"/>
        <dbReference type="EC" id="2.1.2.10"/>
    </reaction>
</comment>
<comment type="subunit">
    <text evidence="1">The glycine cleavage system is composed of four proteins: P, T, L and H.</text>
</comment>
<comment type="similarity">
    <text evidence="1">Belongs to the GcvT family.</text>
</comment>
<proteinExistence type="inferred from homology"/>